<feature type="signal peptide" evidence="8">
    <location>
        <begin position="1"/>
        <end position="19"/>
    </location>
</feature>
<feature type="chain" id="PRO_0000455658" description="Multifunctional-autoprocessing repeats-in-toxin">
    <location>
        <begin position="20"/>
        <end position="5206"/>
    </location>
</feature>
<feature type="chain" id="PRO_0000455659" description="Actin cross-linking toxin F1">
    <location>
        <begin position="20"/>
        <end position="1958"/>
    </location>
</feature>
<feature type="chain" id="PRO_0000455660" description="N-epsilon-fatty acyltransferase F2" evidence="2">
    <location>
        <begin position="2296"/>
        <end position="2901"/>
    </location>
</feature>
<feature type="chain" id="PRO_0000455661" description="ABH effector region toxin F5" evidence="2">
    <location>
        <begin position="2902"/>
        <end position="3400"/>
    </location>
</feature>
<feature type="chain" id="PRO_0000455662" description="Cysteine protease domain-containing toxin F3" evidence="2">
    <location>
        <begin position="4091"/>
        <end position="5206"/>
    </location>
</feature>
<feature type="repeat" description="RtxA 1" evidence="3">
    <location>
        <begin position="101"/>
        <end position="118"/>
    </location>
</feature>
<feature type="repeat" description="RtxA 2" evidence="3">
    <location>
        <begin position="121"/>
        <end position="138"/>
    </location>
</feature>
<feature type="repeat" description="RtxA 3" evidence="3">
    <location>
        <begin position="141"/>
        <end position="157"/>
    </location>
</feature>
<feature type="repeat" description="RtxA 4" evidence="3">
    <location>
        <begin position="161"/>
        <end position="184"/>
    </location>
</feature>
<feature type="repeat" description="RtxA 5" evidence="3">
    <location>
        <begin position="187"/>
        <end position="204"/>
    </location>
</feature>
<feature type="repeat" description="RtxA 6" evidence="3">
    <location>
        <begin position="207"/>
        <end position="224"/>
    </location>
</feature>
<feature type="repeat" description="RtxA 7" evidence="3">
    <location>
        <begin position="255"/>
        <end position="272"/>
    </location>
</feature>
<feature type="repeat" description="RtxA 8" evidence="3">
    <location>
        <begin position="275"/>
        <end position="291"/>
    </location>
</feature>
<feature type="repeat" description="RtxA 9" evidence="3">
    <location>
        <begin position="584"/>
        <end position="601"/>
    </location>
</feature>
<feature type="repeat" description="RtxA 10" evidence="3">
    <location>
        <begin position="604"/>
        <end position="620"/>
    </location>
</feature>
<feature type="repeat" description="RtxA 11" evidence="3">
    <location>
        <begin position="624"/>
        <end position="641"/>
    </location>
</feature>
<feature type="repeat" description="RtxA 12" evidence="3">
    <location>
        <begin position="644"/>
        <end position="658"/>
    </location>
</feature>
<feature type="repeat" description="RtxA 13" evidence="3">
    <location>
        <begin position="741"/>
        <end position="753"/>
    </location>
</feature>
<feature type="repeat" description="RtxA 14" evidence="3">
    <location>
        <begin position="759"/>
        <end position="771"/>
    </location>
</feature>
<feature type="repeat" description="RtxA 15" evidence="3">
    <location>
        <begin position="782"/>
        <end position="798"/>
    </location>
</feature>
<feature type="repeat" description="RtxA 16" evidence="3">
    <location>
        <begin position="801"/>
        <end position="816"/>
    </location>
</feature>
<feature type="repeat" description="RtxA 17" evidence="3">
    <location>
        <begin position="820"/>
        <end position="835"/>
    </location>
</feature>
<feature type="repeat" description="RtxA 18" evidence="3">
    <location>
        <begin position="841"/>
        <end position="855"/>
    </location>
</feature>
<feature type="repeat" description="RtxA 19" evidence="3">
    <location>
        <begin position="858"/>
        <end position="875"/>
    </location>
</feature>
<feature type="repeat" description="RtxA 20" evidence="3">
    <location>
        <begin position="877"/>
        <end position="891"/>
    </location>
</feature>
<feature type="repeat" description="RtxA 21" evidence="3">
    <location>
        <begin position="896"/>
        <end position="910"/>
    </location>
</feature>
<feature type="repeat" description="RtxA 22" evidence="3">
    <location>
        <begin position="915"/>
        <end position="932"/>
    </location>
</feature>
<feature type="repeat" description="RtxA 23" evidence="3">
    <location>
        <begin position="934"/>
        <end position="950"/>
    </location>
</feature>
<feature type="repeat" description="RtxA 24" evidence="3">
    <location>
        <begin position="972"/>
        <end position="984"/>
    </location>
</feature>
<feature type="repeat" description="RtxA 25" evidence="3">
    <location>
        <begin position="991"/>
        <end position="1006"/>
    </location>
</feature>
<feature type="repeat" description="RtxA 26" evidence="3">
    <location>
        <begin position="1031"/>
        <end position="1043"/>
    </location>
</feature>
<feature type="repeat" description="RtxA 27" evidence="3">
    <location>
        <begin position="1067"/>
        <end position="1079"/>
    </location>
</feature>
<feature type="repeat" description="RtxA 28" evidence="3">
    <location>
        <begin position="1087"/>
        <end position="1102"/>
    </location>
</feature>
<feature type="repeat" description="RtxA 29" evidence="3">
    <location>
        <begin position="1110"/>
        <end position="1122"/>
    </location>
</feature>
<feature type="repeat" description="RtxA 30" evidence="3">
    <location>
        <begin position="1125"/>
        <end position="1142"/>
    </location>
</feature>
<feature type="repeat" description="RtxA 31" evidence="3">
    <location>
        <begin position="1145"/>
        <end position="1159"/>
    </location>
</feature>
<feature type="repeat" description="RtxA 32" evidence="3">
    <location>
        <begin position="1163"/>
        <end position="1179"/>
    </location>
</feature>
<feature type="repeat" description="RtxA 33" evidence="3">
    <location>
        <begin position="1184"/>
        <end position="1199"/>
    </location>
</feature>
<feature type="repeat" description="RtxA 34" evidence="3">
    <location>
        <begin position="1201"/>
        <end position="1217"/>
    </location>
</feature>
<feature type="repeat" description="RtxA 35" evidence="3">
    <location>
        <begin position="1220"/>
        <end position="1236"/>
    </location>
</feature>
<feature type="repeat" description="RtxA 36" evidence="3">
    <location>
        <begin position="1242"/>
        <end position="1256"/>
    </location>
</feature>
<feature type="repeat" description="RtxA 37" evidence="3">
    <location>
        <begin position="1258"/>
        <end position="1275"/>
    </location>
</feature>
<feature type="repeat" description="RtxA 38" evidence="3">
    <location>
        <begin position="1296"/>
        <end position="1313"/>
    </location>
</feature>
<feature type="repeat" description="RtxA 39" evidence="3">
    <location>
        <begin position="1315"/>
        <end position="1332"/>
    </location>
</feature>
<feature type="domain" description="Peptidase C80" evidence="4">
    <location>
        <begin position="4111"/>
        <end position="4295"/>
    </location>
</feature>
<feature type="region of interest" description="Disordered" evidence="5">
    <location>
        <begin position="1606"/>
        <end position="1682"/>
    </location>
</feature>
<feature type="region of interest" description="Disordered" evidence="5">
    <location>
        <begin position="1738"/>
        <end position="1895"/>
    </location>
</feature>
<feature type="region of interest" description="Membrane localization region (MLD)" evidence="2">
    <location>
        <begin position="2377"/>
        <end position="2461"/>
    </location>
</feature>
<feature type="region of interest" description="Rho inactivation domain (RID)" evidence="2">
    <location>
        <begin position="2537"/>
        <end position="2901"/>
    </location>
</feature>
<feature type="region of interest" description="ABH effector region" evidence="2">
    <location>
        <begin position="2998"/>
        <end position="3113"/>
    </location>
</feature>
<feature type="region of interest" description="Disordered" evidence="5">
    <location>
        <begin position="4333"/>
        <end position="4362"/>
    </location>
</feature>
<feature type="region of interest" description="Disordered" evidence="5">
    <location>
        <begin position="4738"/>
        <end position="4779"/>
    </location>
</feature>
<feature type="compositionally biased region" description="Polar residues" evidence="5">
    <location>
        <begin position="1606"/>
        <end position="1626"/>
    </location>
</feature>
<feature type="compositionally biased region" description="Basic and acidic residues" evidence="5">
    <location>
        <begin position="1627"/>
        <end position="1646"/>
    </location>
</feature>
<feature type="compositionally biased region" description="Polar residues" evidence="5">
    <location>
        <begin position="1652"/>
        <end position="1671"/>
    </location>
</feature>
<feature type="compositionally biased region" description="Basic and acidic residues" evidence="5">
    <location>
        <begin position="1778"/>
        <end position="1805"/>
    </location>
</feature>
<feature type="compositionally biased region" description="Polar residues" evidence="5">
    <location>
        <begin position="1825"/>
        <end position="1834"/>
    </location>
</feature>
<feature type="compositionally biased region" description="Basic and acidic residues" evidence="5">
    <location>
        <begin position="1835"/>
        <end position="1849"/>
    </location>
</feature>
<feature type="compositionally biased region" description="Polar residues" evidence="5">
    <location>
        <begin position="1870"/>
        <end position="1880"/>
    </location>
</feature>
<feature type="compositionally biased region" description="Low complexity" evidence="5">
    <location>
        <begin position="4750"/>
        <end position="4762"/>
    </location>
</feature>
<feature type="active site" description="For cysteine protease activity" evidence="4">
    <location>
        <position position="4181"/>
    </location>
</feature>
<feature type="active site" description="Nucleophile; for cysteine protease activity" evidence="4">
    <location>
        <position position="4230"/>
    </location>
</feature>
<feature type="binding site" evidence="2">
    <location>
        <begin position="4117"/>
        <end position="4119"/>
    </location>
    <ligand>
        <name>1D-myo-inositol hexakisphosphate</name>
        <dbReference type="ChEBI" id="CHEBI:58130"/>
    </ligand>
</feature>
<feature type="binding site" evidence="2">
    <location>
        <begin position="4144"/>
        <end position="4145"/>
    </location>
    <ligand>
        <name>1D-myo-inositol hexakisphosphate</name>
        <dbReference type="ChEBI" id="CHEBI:58130"/>
    </ligand>
</feature>
<feature type="binding site" evidence="2">
    <location>
        <position position="4175"/>
    </location>
    <ligand>
        <name>1D-myo-inositol hexakisphosphate</name>
        <dbReference type="ChEBI" id="CHEBI:58130"/>
    </ligand>
</feature>
<feature type="binding site" evidence="2">
    <location>
        <position position="4226"/>
    </location>
    <ligand>
        <name>1D-myo-inositol hexakisphosphate</name>
        <dbReference type="ChEBI" id="CHEBI:58130"/>
    </ligand>
</feature>
<feature type="binding site" evidence="2">
    <location>
        <begin position="4259"/>
        <end position="4261"/>
    </location>
    <ligand>
        <name>1D-myo-inositol hexakisphosphate</name>
        <dbReference type="ChEBI" id="CHEBI:58130"/>
    </ligand>
</feature>
<feature type="binding site" evidence="2">
    <location>
        <begin position="4272"/>
        <end position="4273"/>
    </location>
    <ligand>
        <name>1D-myo-inositol hexakisphosphate</name>
        <dbReference type="ChEBI" id="CHEBI:58130"/>
    </ligand>
</feature>
<feature type="binding site" evidence="2">
    <location>
        <position position="4285"/>
    </location>
    <ligand>
        <name>1D-myo-inositol hexakisphosphate</name>
        <dbReference type="ChEBI" id="CHEBI:58130"/>
    </ligand>
</feature>
<feature type="binding site" evidence="2">
    <location>
        <position position="4290"/>
    </location>
    <ligand>
        <name>1D-myo-inositol hexakisphosphate</name>
        <dbReference type="ChEBI" id="CHEBI:58130"/>
    </ligand>
</feature>
<feature type="helix" evidence="13">
    <location>
        <begin position="1969"/>
        <end position="1984"/>
    </location>
</feature>
<feature type="turn" evidence="13">
    <location>
        <begin position="1985"/>
        <end position="1988"/>
    </location>
</feature>
<feature type="strand" evidence="12">
    <location>
        <begin position="1993"/>
        <end position="1995"/>
    </location>
</feature>
<feature type="helix" evidence="13">
    <location>
        <begin position="2010"/>
        <end position="2025"/>
    </location>
</feature>
<feature type="strand" evidence="13">
    <location>
        <begin position="2027"/>
        <end position="2029"/>
    </location>
</feature>
<feature type="turn" evidence="13">
    <location>
        <begin position="2033"/>
        <end position="2035"/>
    </location>
</feature>
<feature type="helix" evidence="13">
    <location>
        <begin position="2036"/>
        <end position="2048"/>
    </location>
</feature>
<feature type="helix" evidence="13">
    <location>
        <begin position="2052"/>
        <end position="2063"/>
    </location>
</feature>
<feature type="turn" evidence="13">
    <location>
        <begin position="2064"/>
        <end position="2066"/>
    </location>
</feature>
<feature type="helix" evidence="13">
    <location>
        <begin position="2074"/>
        <end position="2076"/>
    </location>
</feature>
<feature type="strand" evidence="13">
    <location>
        <begin position="2077"/>
        <end position="2079"/>
    </location>
</feature>
<feature type="strand" evidence="13">
    <location>
        <begin position="2081"/>
        <end position="2085"/>
    </location>
</feature>
<feature type="helix" evidence="13">
    <location>
        <begin position="2087"/>
        <end position="2090"/>
    </location>
</feature>
<feature type="helix" evidence="13">
    <location>
        <begin position="2091"/>
        <end position="2097"/>
    </location>
</feature>
<feature type="strand" evidence="14">
    <location>
        <begin position="2099"/>
        <end position="2101"/>
    </location>
</feature>
<feature type="strand" evidence="13">
    <location>
        <begin position="2103"/>
        <end position="2105"/>
    </location>
</feature>
<feature type="helix" evidence="13">
    <location>
        <begin position="2107"/>
        <end position="2109"/>
    </location>
</feature>
<feature type="helix" evidence="13">
    <location>
        <begin position="2111"/>
        <end position="2129"/>
    </location>
</feature>
<feature type="strand" evidence="14">
    <location>
        <begin position="2133"/>
        <end position="2135"/>
    </location>
</feature>
<feature type="helix" evidence="13">
    <location>
        <begin position="2136"/>
        <end position="2161"/>
    </location>
</feature>
<feature type="strand" evidence="13">
    <location>
        <begin position="2166"/>
        <end position="2172"/>
    </location>
</feature>
<feature type="strand" evidence="13">
    <location>
        <begin position="2175"/>
        <end position="2180"/>
    </location>
</feature>
<feature type="helix" evidence="13">
    <location>
        <begin position="2181"/>
        <end position="2185"/>
    </location>
</feature>
<feature type="helix" evidence="13">
    <location>
        <begin position="2187"/>
        <end position="2195"/>
    </location>
</feature>
<feature type="strand" evidence="13">
    <location>
        <begin position="2198"/>
        <end position="2205"/>
    </location>
</feature>
<feature type="helix" evidence="13">
    <location>
        <begin position="2209"/>
        <end position="2212"/>
    </location>
</feature>
<feature type="strand" evidence="15">
    <location>
        <begin position="2213"/>
        <end position="2215"/>
    </location>
</feature>
<feature type="helix" evidence="13">
    <location>
        <begin position="2217"/>
        <end position="2219"/>
    </location>
</feature>
<feature type="strand" evidence="13">
    <location>
        <begin position="2220"/>
        <end position="2222"/>
    </location>
</feature>
<feature type="strand" evidence="12">
    <location>
        <begin position="2226"/>
        <end position="2228"/>
    </location>
</feature>
<feature type="strand" evidence="13">
    <location>
        <begin position="2231"/>
        <end position="2234"/>
    </location>
</feature>
<feature type="helix" evidence="13">
    <location>
        <begin position="2235"/>
        <end position="2237"/>
    </location>
</feature>
<feature type="helix" evidence="13">
    <location>
        <begin position="2240"/>
        <end position="2249"/>
    </location>
</feature>
<feature type="strand" evidence="13">
    <location>
        <begin position="2251"/>
        <end position="2253"/>
    </location>
</feature>
<feature type="strand" evidence="13">
    <location>
        <begin position="2259"/>
        <end position="2262"/>
    </location>
</feature>
<feature type="helix" evidence="13">
    <location>
        <begin position="2268"/>
        <end position="2276"/>
    </location>
</feature>
<feature type="turn" evidence="13">
    <location>
        <begin position="2278"/>
        <end position="2280"/>
    </location>
</feature>
<feature type="helix" evidence="13">
    <location>
        <begin position="2281"/>
        <end position="2286"/>
    </location>
</feature>
<feature type="strand" evidence="13">
    <location>
        <begin position="2288"/>
        <end position="2293"/>
    </location>
</feature>
<feature type="strand" evidence="13">
    <location>
        <begin position="2296"/>
        <end position="2301"/>
    </location>
</feature>
<feature type="turn" evidence="13">
    <location>
        <begin position="2302"/>
        <end position="2304"/>
    </location>
</feature>
<feature type="strand" evidence="13">
    <location>
        <begin position="2310"/>
        <end position="2316"/>
    </location>
</feature>
<feature type="helix" evidence="13">
    <location>
        <begin position="2320"/>
        <end position="2333"/>
    </location>
</feature>
<feature type="helix" evidence="13">
    <location>
        <begin position="2337"/>
        <end position="2339"/>
    </location>
</feature>
<feature type="strand" evidence="13">
    <location>
        <begin position="2342"/>
        <end position="2347"/>
    </location>
</feature>
<feature type="strand" evidence="13">
    <location>
        <begin position="2350"/>
        <end position="2370"/>
    </location>
</feature>
<feature type="helix" evidence="11">
    <location>
        <begin position="3595"/>
        <end position="3603"/>
    </location>
</feature>
<feature type="helix" evidence="11">
    <location>
        <begin position="3612"/>
        <end position="3614"/>
    </location>
</feature>
<feature type="helix" evidence="11">
    <location>
        <begin position="3615"/>
        <end position="3622"/>
    </location>
</feature>
<feature type="turn" evidence="11">
    <location>
        <begin position="3623"/>
        <end position="3625"/>
    </location>
</feature>
<feature type="helix" evidence="11">
    <location>
        <begin position="3629"/>
        <end position="3648"/>
    </location>
</feature>
<feature type="helix" evidence="11">
    <location>
        <begin position="3654"/>
        <end position="3664"/>
    </location>
</feature>
<feature type="helix" evidence="11">
    <location>
        <begin position="3667"/>
        <end position="3669"/>
    </location>
</feature>
<feature type="helix" evidence="17">
    <location>
        <begin position="4101"/>
        <end position="4103"/>
    </location>
</feature>
<feature type="strand" evidence="17">
    <location>
        <begin position="4121"/>
        <end position="4127"/>
    </location>
</feature>
<feature type="helix" evidence="17">
    <location>
        <begin position="4132"/>
        <end position="4144"/>
    </location>
</feature>
<feature type="turn" evidence="17">
    <location>
        <begin position="4146"/>
        <end position="4148"/>
    </location>
</feature>
<feature type="strand" evidence="17">
    <location>
        <begin position="4149"/>
        <end position="4154"/>
    </location>
</feature>
<feature type="strand" evidence="17">
    <location>
        <begin position="4160"/>
        <end position="4165"/>
    </location>
</feature>
<feature type="helix" evidence="17">
    <location>
        <begin position="4167"/>
        <end position="4169"/>
    </location>
</feature>
<feature type="strand" evidence="17">
    <location>
        <begin position="4172"/>
        <end position="4179"/>
    </location>
</feature>
<feature type="strand" evidence="16">
    <location>
        <begin position="4182"/>
        <end position="4187"/>
    </location>
</feature>
<feature type="strand" evidence="16">
    <location>
        <begin position="4190"/>
        <end position="4193"/>
    </location>
</feature>
<feature type="helix" evidence="17">
    <location>
        <begin position="4198"/>
        <end position="4216"/>
    </location>
</feature>
<feature type="strand" evidence="17">
    <location>
        <begin position="4223"/>
        <end position="4231"/>
    </location>
</feature>
<feature type="strand" evidence="17">
    <location>
        <begin position="4237"/>
        <end position="4240"/>
    </location>
</feature>
<feature type="helix" evidence="17">
    <location>
        <begin position="4241"/>
        <end position="4251"/>
    </location>
</feature>
<feature type="strand" evidence="17">
    <location>
        <begin position="4257"/>
        <end position="4263"/>
    </location>
</feature>
<feature type="strand" evidence="17">
    <location>
        <begin position="4265"/>
        <end position="4267"/>
    </location>
</feature>
<feature type="strand" evidence="17">
    <location>
        <begin position="4273"/>
        <end position="4276"/>
    </location>
</feature>
<feature type="strand" evidence="17">
    <location>
        <begin position="4282"/>
        <end position="4284"/>
    </location>
</feature>
<feature type="helix" evidence="17">
    <location>
        <begin position="4287"/>
        <end position="4289"/>
    </location>
</feature>
<feature type="strand" evidence="17">
    <location>
        <begin position="4290"/>
        <end position="4293"/>
    </location>
</feature>
<evidence type="ECO:0000250" key="1">
    <source>
        <dbReference type="UniProtKB" id="A0A0H3AIG7"/>
    </source>
</evidence>
<evidence type="ECO:0000250" key="2">
    <source>
        <dbReference type="UniProtKB" id="Q9KS12"/>
    </source>
</evidence>
<evidence type="ECO:0000255" key="3"/>
<evidence type="ECO:0000255" key="4">
    <source>
        <dbReference type="PROSITE-ProRule" id="PRU01107"/>
    </source>
</evidence>
<evidence type="ECO:0000256" key="5">
    <source>
        <dbReference type="SAM" id="MobiDB-lite"/>
    </source>
</evidence>
<evidence type="ECO:0000269" key="6">
    <source>
    </source>
</evidence>
<evidence type="ECO:0000303" key="7">
    <source>
    </source>
</evidence>
<evidence type="ECO:0000305" key="8"/>
<evidence type="ECO:0000312" key="9">
    <source>
        <dbReference type="EMBL" id="POB49698.1"/>
    </source>
</evidence>
<evidence type="ECO:0007744" key="10">
    <source>
        <dbReference type="PDB" id="5XN7"/>
    </source>
</evidence>
<evidence type="ECO:0007829" key="11">
    <source>
        <dbReference type="PDB" id="2N9W"/>
    </source>
</evidence>
<evidence type="ECO:0007829" key="12">
    <source>
        <dbReference type="PDB" id="8K9Z"/>
    </source>
</evidence>
<evidence type="ECO:0007829" key="13">
    <source>
        <dbReference type="PDB" id="8KA0"/>
    </source>
</evidence>
<evidence type="ECO:0007829" key="14">
    <source>
        <dbReference type="PDB" id="8KA1"/>
    </source>
</evidence>
<evidence type="ECO:0007829" key="15">
    <source>
        <dbReference type="PDB" id="8KA2"/>
    </source>
</evidence>
<evidence type="ECO:0007829" key="16">
    <source>
        <dbReference type="PDB" id="8YJA"/>
    </source>
</evidence>
<evidence type="ECO:0007829" key="17">
    <source>
        <dbReference type="PDB" id="8YJC"/>
    </source>
</evidence>
<comment type="function">
    <molecule>Multifunctional-autoprocessing repeats-in-toxin</molecule>
    <text evidence="2">Precursor of a multifunctional toxin that causes destruction of the actin cytoskeleton by covalent cross-linking of actin and inactivation of Rho GTPases when translocated into the host cytoplasm. Upon translocation into the host cell, undergoes autoprocessing in cis mediated by the peptidase C80 domain (also named CPD domain): the protease activity is activated upon binding inositol hexakisphosphate (InsP6) present at the host cell membrane and delivers the Cysteine protease domain-containing toxin F3 chain to the host cytosol. The Cysteine protease domain-containing toxin F3 chain will then further cleave and release effector toxin chains that cause disassembly of the actin cytoskeleton and enhance V.vulnificus colonization of the small intestine, possibly by facilitating evasion of phagocytic cells.</text>
</comment>
<comment type="function">
    <molecule>Cysteine protease domain-containing toxin F3</molecule>
    <text evidence="2">Following autocatalytic cleavage in cis, this chain mediates processing in trans to release other individual toxin chains to the host cytosol. Released effector toxin chains cause disassembly of the actin cytoskeleton and enhance V.vulnificus colonization of the small intestine, possibly by facilitating evasion of phagocytic cells.</text>
</comment>
<comment type="function">
    <molecule>Actin cross-linking toxin F1</molecule>
    <text evidence="2">Actin-directed toxin that catalyzes the covalent cross-linking of host cytoplasmic monomeric actin. Mediates the cross-link between 'Lys-50' of one monomer and 'Glu-270' of another actin monomer, resulting in formation of highly toxic actin oligomers that cause cell rounding. The toxin can be highly efficient at very low concentrations by acting on formin homology family proteins: toxic actin oligomers bind with high affinity to formins and adversely affect both nucleation and elongation abilities of formins, causing their potent inhibition in both profilin-dependent and independent manners. Acts as an acid--amino-acid ligase that transfers the gamma-phosphoryl group of ATP to the 'Glu-270' actin residue, resulting in the formation of an activated acyl phosphate intermediate. This intermediate is further hydrolyzed and the energy of hydrolysis is utilized for the formation of the amide bond between actin subunits.</text>
</comment>
<comment type="function">
    <molecule>N-epsilon-fatty acyltransferase F2</molecule>
    <text evidence="2">N-epsilon-fatty acyltransferase that mediates lysine-palmitoylation of host Rho GTPase proteins, with a strong preference for host Rac1. After delivery to the host cytosol, localizes to the host cell membrane where it palmitoylates host Rho GTPase proteins, resulting in loss of all active GTP-bound Rho and subsequent actin depolymerization. Prenylation of host Rac1 at the C-terminus is required for lysine-palmitoylation.</text>
</comment>
<comment type="function">
    <molecule>ABH effector region toxin F5</molecule>
    <text evidence="2">Indirectly activates the small GTPase CDC42.</text>
</comment>
<comment type="catalytic activity">
    <molecule>N-epsilon-fatty acyltransferase F2</molecule>
    <reaction evidence="2">
        <text>L-lysyl-/S-(2E,6E,10E)-geranylgeranyl-L-cysteinyl-[protein] + hexadecanoyl-CoA = N(6)-hexadecanoyl-L-lysyl-/S-(2E,6E,10E)-geranylgeranyl-L-cysteinyl-[protein] + CoA + H(+)</text>
        <dbReference type="Rhea" id="RHEA:59768"/>
        <dbReference type="Rhea" id="RHEA-COMP:17936"/>
        <dbReference type="Rhea" id="RHEA-COMP:17953"/>
        <dbReference type="ChEBI" id="CHEBI:15378"/>
        <dbReference type="ChEBI" id="CHEBI:29969"/>
        <dbReference type="ChEBI" id="CHEBI:57287"/>
        <dbReference type="ChEBI" id="CHEBI:57379"/>
        <dbReference type="ChEBI" id="CHEBI:86021"/>
        <dbReference type="ChEBI" id="CHEBI:138936"/>
    </reaction>
    <physiologicalReaction direction="left-to-right" evidence="2">
        <dbReference type="Rhea" id="RHEA:59769"/>
    </physiologicalReaction>
</comment>
<comment type="catalytic activity">
    <molecule>N-epsilon-fatty acyltransferase F2</molecule>
    <reaction evidence="2">
        <text>L-lysyl-/S-(2E,6E,10E)-geranylgeranyl-L-cysteinyl-[protein] + dodecanoyl-CoA = N(6)-dodecanoyl-L-lysyl-/S-(2E,6E,10E)-geranylgeranyl-L-cysteinyl-[protein] + CoA + H(+)</text>
        <dbReference type="Rhea" id="RHEA:59796"/>
        <dbReference type="Rhea" id="RHEA-COMP:17936"/>
        <dbReference type="Rhea" id="RHEA-COMP:17954"/>
        <dbReference type="ChEBI" id="CHEBI:15378"/>
        <dbReference type="ChEBI" id="CHEBI:29969"/>
        <dbReference type="ChEBI" id="CHEBI:57287"/>
        <dbReference type="ChEBI" id="CHEBI:57375"/>
        <dbReference type="ChEBI" id="CHEBI:86021"/>
        <dbReference type="ChEBI" id="CHEBI:143221"/>
    </reaction>
    <physiologicalReaction direction="left-to-right" evidence="2">
        <dbReference type="Rhea" id="RHEA:59797"/>
    </physiologicalReaction>
</comment>
<comment type="catalytic activity">
    <molecule>N-epsilon-fatty acyltransferase F2</molecule>
    <reaction evidence="2">
        <text>L-lysyl-/S-(2E,6E,10E)-geranylgeranyl-L-cysteinyl-[protein] + decanoyl-CoA = N(6)-decanoyl-L-lysyl-/S-(2E,6E,10E)-geranylgeranyl-L-cysteinyl-[protein] + CoA + H(+)</text>
        <dbReference type="Rhea" id="RHEA:59800"/>
        <dbReference type="Rhea" id="RHEA-COMP:17936"/>
        <dbReference type="Rhea" id="RHEA-COMP:17955"/>
        <dbReference type="ChEBI" id="CHEBI:15378"/>
        <dbReference type="ChEBI" id="CHEBI:29969"/>
        <dbReference type="ChEBI" id="CHEBI:57287"/>
        <dbReference type="ChEBI" id="CHEBI:61430"/>
        <dbReference type="ChEBI" id="CHEBI:86021"/>
        <dbReference type="ChEBI" id="CHEBI:143222"/>
    </reaction>
    <physiologicalReaction direction="left-to-right" evidence="2">
        <dbReference type="Rhea" id="RHEA:59801"/>
    </physiologicalReaction>
</comment>
<comment type="cofactor">
    <cofactor evidence="2">
        <name>Mg(2+)</name>
        <dbReference type="ChEBI" id="CHEBI:18420"/>
    </cofactor>
    <text evidence="1">Binds 2 Mg(2+) ions per subunit. Mg(2+) is required for actin cross-linking activity. Can also use Mn(2+) ions instead of Mg(2+).</text>
</comment>
<comment type="subcellular location">
    <molecule>Multifunctional-autoprocessing repeats-in-toxin</molecule>
    <subcellularLocation>
        <location evidence="2">Secreted</location>
    </subcellularLocation>
    <subcellularLocation>
        <location evidence="2">Host cytoplasm</location>
        <location evidence="2">Host cytosol</location>
    </subcellularLocation>
    <text evidence="2">Secreted via the type I secretion system.</text>
</comment>
<comment type="subcellular location">
    <molecule>N-epsilon-fatty acyltransferase F2</molecule>
    <subcellularLocation>
        <location evidence="2">Host cell membrane</location>
    </subcellularLocation>
    <text evidence="2">Targeted to the host cell membrane via the membrane localization region (MLD).</text>
</comment>
<comment type="subcellular location">
    <molecule>Actin cross-linking toxin F1</molecule>
    <subcellularLocation>
        <location evidence="2">Host cytoplasm</location>
        <location evidence="2">Host cytosol</location>
    </subcellularLocation>
</comment>
<dbReference type="EC" id="3.4.22.-" evidence="2"/>
<dbReference type="EC" id="6.3.2.-" evidence="2"/>
<dbReference type="EC" id="2.3.1.-" evidence="6"/>
<dbReference type="EMBL" id="PDGH01000027">
    <property type="protein sequence ID" value="POB49698.1"/>
    <property type="molecule type" value="Genomic_DNA"/>
</dbReference>
<dbReference type="RefSeq" id="WP_103199790.1">
    <property type="nucleotide sequence ID" value="NZ_PDGH01000027.1"/>
</dbReference>
<dbReference type="PDB" id="2N9W">
    <property type="method" value="NMR"/>
    <property type="chains" value="A=3591-3669"/>
</dbReference>
<dbReference type="PDB" id="5XN7">
    <property type="method" value="X-ray"/>
    <property type="resolution" value="2.70 A"/>
    <property type="chains" value="A/B=380-995"/>
</dbReference>
<dbReference type="PDB" id="8K9Z">
    <property type="method" value="X-ray"/>
    <property type="resolution" value="2.90 A"/>
    <property type="chains" value="A/C=1967-2371"/>
</dbReference>
<dbReference type="PDB" id="8KA0">
    <property type="method" value="X-ray"/>
    <property type="resolution" value="2.35 A"/>
    <property type="chains" value="A/C/E/G=1959-2374"/>
</dbReference>
<dbReference type="PDB" id="8KA1">
    <property type="method" value="X-ray"/>
    <property type="resolution" value="2.82 A"/>
    <property type="chains" value="A/C/E/G=1959-2374"/>
</dbReference>
<dbReference type="PDB" id="8KA2">
    <property type="method" value="X-ray"/>
    <property type="resolution" value="3.38 A"/>
    <property type="chains" value="A/B=1959-2374"/>
</dbReference>
<dbReference type="PDB" id="8YJA">
    <property type="method" value="X-ray"/>
    <property type="resolution" value="2.20 A"/>
    <property type="chains" value="A/B=4090-4296"/>
</dbReference>
<dbReference type="PDB" id="8YJC">
    <property type="method" value="X-ray"/>
    <property type="resolution" value="1.30 A"/>
    <property type="chains" value="A=4086-4299"/>
</dbReference>
<dbReference type="PDBsum" id="2N9W"/>
<dbReference type="PDBsum" id="5XN7"/>
<dbReference type="PDBsum" id="8K9Z"/>
<dbReference type="PDBsum" id="8KA0"/>
<dbReference type="PDBsum" id="8KA1"/>
<dbReference type="PDBsum" id="8KA2"/>
<dbReference type="PDBsum" id="8YJA"/>
<dbReference type="PDBsum" id="8YJC"/>
<dbReference type="EMDB" id="EMD-37593"/>
<dbReference type="SMR" id="A0A2S3R7M0"/>
<dbReference type="Proteomes" id="UP000237466">
    <property type="component" value="Unassembled WGS sequence"/>
</dbReference>
<dbReference type="GO" id="GO:0005576">
    <property type="term" value="C:extracellular region"/>
    <property type="evidence" value="ECO:0007669"/>
    <property type="project" value="UniProtKB-SubCell"/>
</dbReference>
<dbReference type="GO" id="GO:0044164">
    <property type="term" value="C:host cell cytosol"/>
    <property type="evidence" value="ECO:0007669"/>
    <property type="project" value="UniProtKB-SubCell"/>
</dbReference>
<dbReference type="GO" id="GO:0020002">
    <property type="term" value="C:host cell plasma membrane"/>
    <property type="evidence" value="ECO:0007669"/>
    <property type="project" value="UniProtKB-SubCell"/>
</dbReference>
<dbReference type="GO" id="GO:0016020">
    <property type="term" value="C:membrane"/>
    <property type="evidence" value="ECO:0007669"/>
    <property type="project" value="UniProtKB-KW"/>
</dbReference>
<dbReference type="GO" id="GO:0016746">
    <property type="term" value="F:acyltransferase activity"/>
    <property type="evidence" value="ECO:0007669"/>
    <property type="project" value="UniProtKB-KW"/>
</dbReference>
<dbReference type="GO" id="GO:0008234">
    <property type="term" value="F:cysteine-type peptidase activity"/>
    <property type="evidence" value="ECO:0007669"/>
    <property type="project" value="UniProtKB-KW"/>
</dbReference>
<dbReference type="GO" id="GO:0016874">
    <property type="term" value="F:ligase activity"/>
    <property type="evidence" value="ECO:0007669"/>
    <property type="project" value="UniProtKB-KW"/>
</dbReference>
<dbReference type="GO" id="GO:0008289">
    <property type="term" value="F:lipid binding"/>
    <property type="evidence" value="ECO:0007669"/>
    <property type="project" value="UniProtKB-KW"/>
</dbReference>
<dbReference type="GO" id="GO:0046872">
    <property type="term" value="F:metal ion binding"/>
    <property type="evidence" value="ECO:0007669"/>
    <property type="project" value="UniProtKB-KW"/>
</dbReference>
<dbReference type="GO" id="GO:0090729">
    <property type="term" value="F:toxin activity"/>
    <property type="evidence" value="ECO:0007669"/>
    <property type="project" value="UniProtKB-KW"/>
</dbReference>
<dbReference type="GO" id="GO:0006508">
    <property type="term" value="P:proteolysis"/>
    <property type="evidence" value="ECO:0007669"/>
    <property type="project" value="UniProtKB-KW"/>
</dbReference>
<dbReference type="CDD" id="cd20495">
    <property type="entry name" value="C58_PaToxP-like"/>
    <property type="match status" value="1"/>
</dbReference>
<dbReference type="CDD" id="cd20501">
    <property type="entry name" value="C80_RtxA-like"/>
    <property type="match status" value="1"/>
</dbReference>
<dbReference type="CDD" id="cd14729">
    <property type="entry name" value="RtxA-like"/>
    <property type="match status" value="1"/>
</dbReference>
<dbReference type="CDD" id="cd16840">
    <property type="entry name" value="toxin_MLD"/>
    <property type="match status" value="2"/>
</dbReference>
<dbReference type="Gene3D" id="1.20.140.180">
    <property type="match status" value="2"/>
</dbReference>
<dbReference type="Gene3D" id="3.40.50.11050">
    <property type="match status" value="1"/>
</dbReference>
<dbReference type="Gene3D" id="3.40.50.11550">
    <property type="match status" value="1"/>
</dbReference>
<dbReference type="Gene3D" id="3.40.50.1820">
    <property type="entry name" value="alpha/beta hydrolase"/>
    <property type="match status" value="1"/>
</dbReference>
<dbReference type="Gene3D" id="2.60.120.260">
    <property type="entry name" value="Galactose-binding domain-like"/>
    <property type="match status" value="1"/>
</dbReference>
<dbReference type="InterPro" id="IPR000073">
    <property type="entry name" value="AB_hydrolase_1"/>
</dbReference>
<dbReference type="InterPro" id="IPR029058">
    <property type="entry name" value="AB_hydrolase_fold"/>
</dbReference>
<dbReference type="InterPro" id="IPR020974">
    <property type="entry name" value="CPD_dom"/>
</dbReference>
<dbReference type="InterPro" id="IPR038383">
    <property type="entry name" value="CPD_dom_sf"/>
</dbReference>
<dbReference type="InterPro" id="IPR020972">
    <property type="entry name" value="Dermonecrotic/RTX_toxin_MLD"/>
</dbReference>
<dbReference type="InterPro" id="IPR049824">
    <property type="entry name" value="RtxA-like_C80"/>
</dbReference>
<dbReference type="InterPro" id="IPR048568">
    <property type="entry name" value="RtxA_C"/>
</dbReference>
<dbReference type="InterPro" id="IPR011509">
    <property type="entry name" value="RtxA_toxin"/>
</dbReference>
<dbReference type="InterPro" id="IPR011049">
    <property type="entry name" value="Serralysin-like_metalloprot_C"/>
</dbReference>
<dbReference type="InterPro" id="IPR048461">
    <property type="entry name" value="ToxA-like_C2"/>
</dbReference>
<dbReference type="NCBIfam" id="NF012221">
    <property type="entry name" value="MARTX_Nterm"/>
    <property type="match status" value="1"/>
</dbReference>
<dbReference type="PANTHER" id="PTHR12277">
    <property type="entry name" value="ALPHA/BETA HYDROLASE DOMAIN-CONTAINING PROTEIN"/>
    <property type="match status" value="1"/>
</dbReference>
<dbReference type="PANTHER" id="PTHR12277:SF81">
    <property type="entry name" value="PROTEIN ABHD13"/>
    <property type="match status" value="1"/>
</dbReference>
<dbReference type="Pfam" id="PF00561">
    <property type="entry name" value="Abhydrolase_1"/>
    <property type="match status" value="1"/>
</dbReference>
<dbReference type="Pfam" id="PF11647">
    <property type="entry name" value="MLD"/>
    <property type="match status" value="2"/>
</dbReference>
<dbReference type="Pfam" id="PF11713">
    <property type="entry name" value="Peptidase_C80"/>
    <property type="match status" value="1"/>
</dbReference>
<dbReference type="Pfam" id="PF20899">
    <property type="entry name" value="PMT_C2"/>
    <property type="match status" value="1"/>
</dbReference>
<dbReference type="Pfam" id="PF07634">
    <property type="entry name" value="RtxA"/>
    <property type="match status" value="41"/>
</dbReference>
<dbReference type="Pfam" id="PF21735">
    <property type="entry name" value="RtxA_C"/>
    <property type="match status" value="6"/>
</dbReference>
<dbReference type="SUPFAM" id="SSF53474">
    <property type="entry name" value="alpha/beta-Hydrolases"/>
    <property type="match status" value="1"/>
</dbReference>
<dbReference type="SUPFAM" id="SSF51120">
    <property type="entry name" value="beta-Roll"/>
    <property type="match status" value="2"/>
</dbReference>
<dbReference type="SUPFAM" id="SSF159501">
    <property type="entry name" value="EreA/ChaN-like"/>
    <property type="match status" value="1"/>
</dbReference>
<dbReference type="SUPFAM" id="SSF158842">
    <property type="entry name" value="PMT central region-like"/>
    <property type="match status" value="2"/>
</dbReference>
<dbReference type="PROSITE" id="PS51771">
    <property type="entry name" value="CGT_MARTX_CPD"/>
    <property type="match status" value="1"/>
</dbReference>
<keyword id="KW-0002">3D-structure</keyword>
<keyword id="KW-0012">Acyltransferase</keyword>
<keyword id="KW-0068">Autocatalytic cleavage</keyword>
<keyword id="KW-1032">Host cell membrane</keyword>
<keyword id="KW-1035">Host cytoplasm</keyword>
<keyword id="KW-1043">Host membrane</keyword>
<keyword id="KW-0378">Hydrolase</keyword>
<keyword id="KW-0436">Ligase</keyword>
<keyword id="KW-0446">Lipid-binding</keyword>
<keyword id="KW-0460">Magnesium</keyword>
<keyword id="KW-0472">Membrane</keyword>
<keyword id="KW-0479">Metal-binding</keyword>
<keyword id="KW-0511">Multifunctional enzyme</keyword>
<keyword id="KW-0645">Protease</keyword>
<keyword id="KW-0677">Repeat</keyword>
<keyword id="KW-0964">Secreted</keyword>
<keyword id="KW-0732">Signal</keyword>
<keyword id="KW-0788">Thiol protease</keyword>
<keyword id="KW-0800">Toxin</keyword>
<keyword id="KW-0808">Transferase</keyword>
<keyword id="KW-0843">Virulence</keyword>
<reference key="1">
    <citation type="journal article" date="2018" name="Front. Microbiol.">
        <title>Phylogeny of Vibrio vulnificus from the Analysis of the Core-Genome: Implications for Intra-Species Taxonomy.</title>
        <authorList>
            <person name="Roig F.J."/>
            <person name="Gonzalez-Candelas F."/>
            <person name="Sanjuan E."/>
            <person name="Fouz B."/>
            <person name="Feil E.J."/>
            <person name="Llorens C."/>
            <person name="Baker-Austin C."/>
            <person name="Oliver J.D."/>
            <person name="Danin-Poleg Y."/>
            <person name="Gibas C.J."/>
            <person name="Kashi Y."/>
            <person name="Gulig P.A."/>
            <person name="Morrison S.S."/>
            <person name="Amaro C."/>
        </authorList>
    </citation>
    <scope>NUCLEOTIDE SEQUENCE [LARGE SCALE GENOMIC DNA]</scope>
    <source>
        <strain>CECT4608</strain>
    </source>
</reference>
<reference evidence="10" key="2">
    <citation type="journal article" date="2017" name="Science">
        <title>Nepsilon-fatty acylation of Rho GTPases by a MARTX toxin effector.</title>
        <authorList>
            <person name="Zhou Y."/>
            <person name="Huang C."/>
            <person name="Yin L."/>
            <person name="Wan M."/>
            <person name="Wang X."/>
            <person name="Li L."/>
            <person name="Liu Y."/>
            <person name="Wang Z."/>
            <person name="Fu P."/>
            <person name="Zhang N."/>
            <person name="Chen S."/>
            <person name="Liu X."/>
            <person name="Shao F."/>
            <person name="Zhu Y."/>
        </authorList>
    </citation>
    <scope>X-RAY CRYSTALLOGRAPHY (2.70 ANGSTROMS) OF 2286-2901 (N-EPSILON-FATTY ACYLTRANSFERASE F2)</scope>
    <source>
        <strain>ATCC 27562 / DSM 10143 / JCM 3725 / BCRC 12905 / CCUG 13448 / KCTC 2959 / LMG 13545 / NBRC 15645 / NCIMB 2046 / WDCM 00139 / 324</strain>
    </source>
</reference>
<gene>
    <name evidence="9" type="ORF">CRN52_02910</name>
</gene>
<sequence length="5206" mass="556341">MGKPFWRSVEYFFTGNYSADDGNNSIVAIGFGGEIHAYGGDDHVTVGSIGATVYTGSGNDTVVGGSAYLRVEDTTGHLSVKGAAGYADINKSGDGNVSFAGAAGGVSIDHLGNNGDVSYGGAAAYNGITRKGLSGNVTFKGAGGYNALWHETNQGNLSFAGAGAGNKLDRTWFNRYQGSRGDVTFDGAGAANSISSRVETGNITFRGAGADNHLVRKGKVGDITLQGAGASNRIERTRQAEDVYAQTRGNIRFEGVGGYNSLYSDVAHGDIHFSGGGAYNTITRKGSGSSFDAQGMEYAKAEDIVLTAAQMHGLSIDNGNKFHAVTAVKSEREPNTYLFAIADGTYTKINKVRLYNDPETGKLKYYSEAWFKRGNHLAELARSDVSSAGGFEVNPINGGYTLANIAVEHQQSVTVHAVEKNLTEYEWVTYANGTLIDAKDVALSEAKMGGHAISTDGTTVDVQAVKSNRKPNTYVYAKVLGPYTKIVVVELANDPKTGALKYQARSWYKEGDHTANLANEDISSANGYHSMGKGGYSLSDLHYSVNAVRSTSETVADIDEYTDQTLFKPATDSGESSGDVRFNGAGGGNVIKSNVTRGNVYFNGGGIANVILHSSQFGNTEFNGGGAANVIVKSGEEGDLTFRGAGLANVLVHQSKQGKMDVYAGGAVNVLVRIGDGQYLAHLLAYGNISVHKGNGNSRVVMLGGYNTHTQIGSGNGLWLAAGGFNVMTQVGKGDVASVLAGGANVLTKVGDGDLTAGMLGGANVITHISGDNETSNTTAVALGGANILTKKGKGNTLAVMGGGANVLTHVGDGTTTGVMVGGANILTKVGNGDTTGIMLGVGNVLTHVGDGQTLGVMGAAGNIFTKVGDGTSIAVMIGAGNIFTHVGEGNAWALMGGLGNVFTKVGNGDALALMVAEANVFTHIGDGMSVALMLAKGNVATKVGNGTTLAAMVGNANIFTHVGSGSTFAAMIGQANIMTKVGNDLTAALMVGKANIYTHVGDGTSLGIFAGEVNVMTKIGNGTTLAAMFGKANIMTHVGDGLTGVLALGEANIVTKVGDDFMGVVAAAKANVVTHVGDATTAAVLAGKGNILTKVGEGTTVGLLISDIGNVMTHVGDGTTIGIAKGKANIITKVGDGLGVNVAWGQANVFTQVGDGDRYNFAKGEANIITKVGDGKEVSVVQGKANIITHVGNGDDYTGAWGKANVITKVGNGRNVVLAKGEANIVTQVGDGDSFNALWSKGNIVTKVGDGMQVTAAKGKANITTTVGDGLSVTAAYGDANINTKVGDGVSVNVAWGKYNINTKVGDGLNVAVMKGKANANIHVGDGLNINASYAQNNVAIKVGNGDFYSLAVASSNTSSNKLSALFDNIKQTLLGVGGSQAINYLVQGDEASSSGTQKGRGAIATPEITKLDGFQMEAIEEVGSDLGDSLTGSVTKVDTPDLNKMQNALDVDGSSDQTQAPNLIVNGDFEQGDRGWKSTHGVEASYSGNVYGVNGEGHGARVTELDTYTNTSLYQDLTDLTEGEVIAVSFDFAKRAGLSNNEGIEVLWNGEVVFSSSGDASAWQQKTLKLTAHAGSNRIEFKGTGHNDGLGYILDNVVAKSESSQQANAVSEHATQNQASQNALSDKERAEADRQRLEQEKQKQLDAVAGSQSQLESTDQQALGNNGQAQRDAVKEESEAVTAELTKLAQGLDVLDGQATHTGESGDQWRNDFAGGLLDGVQSQLDDAKQLANDKIAAAKQTQSDNNSKVKESVAKSEAGVAQGEQNRAGAEQDIAEAKADAETRKADAVAKSNDAKQAESDAHSAANDAQSRGDRDAMNAENKANQAQNDAKGTKQNEGDRPDREGVAGSGLSGNAHSVEGAGETGSHITTDSQTNADGRFSEGLSEQEQEALEGATNAVNRLQINAGIRGKNSGSTITSMFTETNSDSIVVPTTASQDVVRKEIRISGVNLEGLGEASHDSAESLVAARAEKVANLYRWLDTDNDVATDKYVPVPGFERVDVDVSDEVKQRMIQSMSGYIEHTDNQVPKDQAEALATLFVESTLDYDWDKRVEFLTKLESYGYSFEAPHAEKSIVSFWSGKNFKQYRDILDNAQTDGKKVVYDIDVKGNAFAIDLNKHLMRWGGLFLDPDNAEQNQLKSSIDAATFSNTGFWSSVYATGAQNDVYVIAEGGVRLGNYFWNVELPALRQLQREGLVGEIRLLDKPVSEYKDLPADQIGRRLTDAGVAVKVRFDALSHERQAELLADNPDGYKADTLVELDVKLSAIDSMLRESLPFYSLRTERNLLVQEGEEGFEVRSWPGIDGKSKTILLDNPEDAAQQKSIERFILANFDNFEQMPDELFLVDNKVLSHHDGRTRIIAQKEDGAWTYNTNVELMSVTELLDAAHVNGKVRGDSYQQVIDALTEYHASTVEHADYELESVEKLLNLRKQIEGYVLGHPDSGRVEAMNSLLNQVNSRLEEVSVLAVSEQSIKAHDSFSRLYDQLDNANLKESKHLYLDGNGDFVTKGKGNLATIDQLGGSDAVLEKVKAAVTHEYGQVVADTIFARLSANDLAKDGKGIDIAGLNKVHQAIEQHMSPVSATMYIWKPSDHSTLGHAALQIGQGRTQLEGQAAADFNKQNYVSWWPLGSKSSNIRNIFNVATEDQPDLKLRWSDFSQPAHQNDTLEHDMASEENDGFGLKDGETKLKRFIEKLNAAKGIDASYKDASEGYASVLLGNPDMLASTGIPAHVFQPFVDQWNDTSYDMMDVANRFAEELQKQAQASGDPALVEKRIDNVVRLFAERALEEIEAFKASQADEGRVFRINLEGLDVAAMQAEWNRLSNDPDARYQLLTKNCSSTVAKVLKAGGADKLIGHTWRPKFGVWTPTELFNFGQALQEAQLEIAAKKQSHQVTDVLDALSGNEKHKENVTIENDGTPPRDKESLSPLTRFLNNELYGEKDARRKIGEITQTLLDHAVENGESQKVTLKGEAGRLTGYYHQGAASSEGETSATSGKVVLFLHGSGSSAEEQASAIRNHYQKQGIDMLAVNLRGYGESDGGPSEKGLYQDARTMFNYLVNDKGIDPSNIIIHGYSMGGPIAADLARYAAQNGQAVSGLLLDRPMPSMTKAITAHEMANPAGIVGAIAKAVNGQFSVEKNLKGLPKETPILLLTDNEGLGEEGEKLRAKLAIAGYNVTGEQTFYGHEASNRLMGQYADQIVSGLFNAEQAAVEAGEVLKGLEKDFKRYGDALKPDTSVPGKSKDIRTTKDFLNGYKNDHAKEIVDGFRSDMSIKQLVDLFVKGNWSAEQKGALAWEIESRALKVTFQNKSEKYNRLFREIASAGVVDAKATEQLAPQLMLLNLSNDGFGGRCDPLSKLVLVAKQLENDGQVGVARQLLEKMYSAAAVLSNPTLYSDSEKANASKLLSSLAAIHAKNPMHDTSMKVWQEKLEGKQALTVNGVVEKITDASANGKPVLLELDAPGHAMAAWAKDSGDDRVYGFYDPNAGIVEFSSAEKFGDYLTRFFGKSDLDMAQSYKLGKNDAGEAIFNRVVVMDGNTLASYKPTFGDKTTMQGILDLPVFDATPIKKPTGGVASDLEALGDKTKVVVDLAQIFTVQELKERAKVFAKPIGASYQGILDQLDLVHQAKGRDQIAASFELNKKINDYIAEHPTSGRNQALTQLKEQVTSALFIGKMQVAQAGIDAIAQTRPELAARIFMVAIEEANGKHVGLTDMMVRWANEDPYLAPKHGYKGETPSDLGFDAKYHVDLGEHYADFKQWLETSQSNGLLSKATLDESTKTVHLGYSYQELQDLTGAESVQMAFYFLKEAAKKADPISGDSAEMILLKKFADQSYLSQLDSDRMDQIEGIYRSSHETDIDAWDRRYSGTGYDELTNKLASATGVDEQLAVLLDDRKGLLIGEVHGSDVNGLRFVNEQMDALKKQGVTVIGLEHLRSDLAQPLIDRYLATGVMSSELSAMLKTKHLDVTLFENARANGIRIVALDANSSARPNVQGTEHGLMYRAGAANNIAVEVLQNLPDGEKFVAIYGKAHLQSHKGIEGFVPGITHRLDLPALKVSDSNQFTVEQDDVSLRVVYDDVANKPKITFKDSLSGANTALHNQNVNDWERVVVTPTADGGESRFDGQIIVQMENDDVVAKAAANLAGKHPESSVVVQIDSDGNYRVVYGDPSKLDGKLRWQLVGHGRDDSESNNTRLSGYSADELAVKLAKFQQSFNQAENINNKPDHISIVGCSLVSDDKQKGFGHQFINAMDANGLRVDVSVRSSELAVDEAGRKHTKDANGDWVQKAENNKVSLSWDEQGEVVAKDERIRNGIAEGDIDLSRIGVSDVDEPARGAIGDNNDVFDAPEKRKAETETSSSSANNKLSYSGNIQVNVGDGEFTAVNWGTSNVGIKVGTGGFKSLAFGDNNVMVHIGNGESKHSFDIGGYQALEGAQMFIGNRNVSFNLGRSNDLIVMMDKSIPTPPLVNPFDGAARISGVLQSIATSGEGQDWLAAQEQQWTLSGAKKFVKDMSGLDQSSSVDYTSLVELDSQNERSSRGLKHDAEAALNKQYNQWLSGNSDSDTSKLSRADKLRQANEKLAFNFAVGGQGADIQVTTGNWNFMFGDNIQSILDTNLGSLFGLMTQQFSATGQAKTTFTYTPEDLPRQLKNKLLGQLAGVGAETTLADIFGVDYTASGQIVSRNGEAVDGVAILKEMLEVIGEFSGDQLQAFVDPAKLLDSLKSGINMGADGIKSFAETHGLKEKAPEEEEDNSSVSVNGASVNSAQGATVADGSTETAETPDRAFGFNSLNLPNLFATIFSQDKQKEMKSLVENLKENLTADLLNMKEKTFDFLRNSGHLQGDGDINISLGNYNFNWGGDGKDLGAYLGDNNNFWGGRGDDVFYATGTSNIFTGGEGNDMGVLMGRENMMFGGDGNDTAVVAGRINHVFLGAGDDQSFVFGEGGEIDTGSGRDYVVTSGNFNRVDTGDDQDYSVTIGNNNQVELGAGNDFANVFGNYNRINASAGNDVVKLMGYHAVLNGGEGEDHLIAAAISKFSQFNGGEGRDLMVLGGYQNTFKGGTDVDSFVVSGDVIDNLVEDIRSEDNIVFNGIDWQKLWFERSGYDLKLSILRDPASDSDQAKFEHIGSVTFSDYFNGNRAQVIIAMGEKDATGEREYTTLSESAIDALVQAMSGFDPQAGDNGFMDNLDSKSRVAITTAWADVVHKKGITV</sequence>
<name>MARTX_VIBVL</name>
<proteinExistence type="evidence at protein level"/>
<protein>
    <recommendedName>
        <fullName evidence="2">Multifunctional-autoprocessing repeats-in-toxin</fullName>
        <shortName evidence="2">MARTX</shortName>
        <ecNumber evidence="2">3.4.22.-</ecNumber>
    </recommendedName>
    <component>
        <recommendedName>
            <fullName evidence="2">Actin cross-linking toxin F1</fullName>
            <ecNumber evidence="2">6.3.2.-</ecNumber>
        </recommendedName>
    </component>
    <component>
        <recommendedName>
            <fullName>N-epsilon-fatty acyltransferase F2</fullName>
            <ecNumber evidence="6">2.3.1.-</ecNumber>
        </recommendedName>
        <alternativeName>
            <fullName evidence="2">Rho inactivation domain-containing toxin F2</fullName>
            <shortName evidence="7">RIDvc</shortName>
        </alternativeName>
    </component>
    <component>
        <recommendedName>
            <fullName evidence="2">ABH effector region toxin F5</fullName>
        </recommendedName>
    </component>
    <component>
        <recommendedName>
            <fullName evidence="2">Cysteine protease domain-containing toxin F3</fullName>
            <ecNumber evidence="2">3.4.22.-</ecNumber>
        </recommendedName>
    </component>
</protein>
<accession>A0A2S3R7M0</accession>
<organism>
    <name type="scientific">Vibrio vulnificus</name>
    <dbReference type="NCBI Taxonomy" id="672"/>
    <lineage>
        <taxon>Bacteria</taxon>
        <taxon>Pseudomonadati</taxon>
        <taxon>Pseudomonadota</taxon>
        <taxon>Gammaproteobacteria</taxon>
        <taxon>Vibrionales</taxon>
        <taxon>Vibrionaceae</taxon>
        <taxon>Vibrio</taxon>
    </lineage>
</organism>